<reference key="1">
    <citation type="journal article" date="2005" name="Nat. Biotechnol.">
        <title>Complete genome sequence of the plant commensal Pseudomonas fluorescens Pf-5.</title>
        <authorList>
            <person name="Paulsen I.T."/>
            <person name="Press C.M."/>
            <person name="Ravel J."/>
            <person name="Kobayashi D.Y."/>
            <person name="Myers G.S.A."/>
            <person name="Mavrodi D.V."/>
            <person name="DeBoy R.T."/>
            <person name="Seshadri R."/>
            <person name="Ren Q."/>
            <person name="Madupu R."/>
            <person name="Dodson R.J."/>
            <person name="Durkin A.S."/>
            <person name="Brinkac L.M."/>
            <person name="Daugherty S.C."/>
            <person name="Sullivan S.A."/>
            <person name="Rosovitz M.J."/>
            <person name="Gwinn M.L."/>
            <person name="Zhou L."/>
            <person name="Schneider D.J."/>
            <person name="Cartinhour S.W."/>
            <person name="Nelson W.C."/>
            <person name="Weidman J."/>
            <person name="Watkins K."/>
            <person name="Tran K."/>
            <person name="Khouri H."/>
            <person name="Pierson E.A."/>
            <person name="Pierson L.S. III"/>
            <person name="Thomashow L.S."/>
            <person name="Loper J.E."/>
        </authorList>
    </citation>
    <scope>NUCLEOTIDE SEQUENCE [LARGE SCALE GENOMIC DNA]</scope>
    <source>
        <strain>ATCC BAA-477 / NRRL B-23932 / Pf-5</strain>
    </source>
</reference>
<organism>
    <name type="scientific">Pseudomonas fluorescens (strain ATCC BAA-477 / NRRL B-23932 / Pf-5)</name>
    <dbReference type="NCBI Taxonomy" id="220664"/>
    <lineage>
        <taxon>Bacteria</taxon>
        <taxon>Pseudomonadati</taxon>
        <taxon>Pseudomonadota</taxon>
        <taxon>Gammaproteobacteria</taxon>
        <taxon>Pseudomonadales</taxon>
        <taxon>Pseudomonadaceae</taxon>
        <taxon>Pseudomonas</taxon>
    </lineage>
</organism>
<sequence>MQHEAHTHGINMSALGRDKQSLSLEQETVAIEVPGLSLYYGEKQALFDVSMNIPKQRVTAFIGPSGCGKSTLLRTFNRMNDLVDGCRVEGAINLYGNNIYRKGEDVAELRRRVGMVFQKPNPFPKTIYENVVYGLRIQGINKKRVLDEAVEWALKGAALWDEVKDRLHDSALGLSGGQQQRLVIARTIAVEPEVLLLDEPCSALDPISTLKVEELIYELKSKFTIVIVTHNMQQAARVSDYTAFMYMGKLVEFGDTDTLFTNPAKKQTEDYITGRYG</sequence>
<feature type="chain" id="PRO_0000272497" description="Phosphate import ATP-binding protein PstB">
    <location>
        <begin position="1"/>
        <end position="277"/>
    </location>
</feature>
<feature type="domain" description="ABC transporter" evidence="1">
    <location>
        <begin position="31"/>
        <end position="272"/>
    </location>
</feature>
<feature type="binding site" evidence="1">
    <location>
        <begin position="63"/>
        <end position="70"/>
    </location>
    <ligand>
        <name>ATP</name>
        <dbReference type="ChEBI" id="CHEBI:30616"/>
    </ligand>
</feature>
<evidence type="ECO:0000255" key="1">
    <source>
        <dbReference type="HAMAP-Rule" id="MF_01702"/>
    </source>
</evidence>
<comment type="function">
    <text evidence="1">Part of the ABC transporter complex PstSACB involved in phosphate import. Responsible for energy coupling to the transport system.</text>
</comment>
<comment type="catalytic activity">
    <reaction evidence="1">
        <text>phosphate(out) + ATP + H2O = ADP + 2 phosphate(in) + H(+)</text>
        <dbReference type="Rhea" id="RHEA:24440"/>
        <dbReference type="ChEBI" id="CHEBI:15377"/>
        <dbReference type="ChEBI" id="CHEBI:15378"/>
        <dbReference type="ChEBI" id="CHEBI:30616"/>
        <dbReference type="ChEBI" id="CHEBI:43474"/>
        <dbReference type="ChEBI" id="CHEBI:456216"/>
        <dbReference type="EC" id="7.3.2.1"/>
    </reaction>
</comment>
<comment type="subunit">
    <text evidence="1">The complex is composed of two ATP-binding proteins (PstB), two transmembrane proteins (PstC and PstA) and a solute-binding protein (PstS).</text>
</comment>
<comment type="subcellular location">
    <subcellularLocation>
        <location evidence="1">Cell inner membrane</location>
        <topology evidence="1">Peripheral membrane protein</topology>
    </subcellularLocation>
</comment>
<comment type="similarity">
    <text evidence="1">Belongs to the ABC transporter superfamily. Phosphate importer (TC 3.A.1.7) family.</text>
</comment>
<protein>
    <recommendedName>
        <fullName evidence="1">Phosphate import ATP-binding protein PstB</fullName>
        <ecNumber evidence="1">7.3.2.1</ecNumber>
    </recommendedName>
    <alternativeName>
        <fullName evidence="1">ABC phosphate transporter</fullName>
    </alternativeName>
    <alternativeName>
        <fullName evidence="1">Phosphate-transporting ATPase</fullName>
    </alternativeName>
</protein>
<accession>Q4K3K9</accession>
<name>PSTB_PSEF5</name>
<gene>
    <name evidence="1" type="primary">pstB</name>
    <name type="ordered locus">PFL_6116</name>
</gene>
<proteinExistence type="inferred from homology"/>
<keyword id="KW-0067">ATP-binding</keyword>
<keyword id="KW-0997">Cell inner membrane</keyword>
<keyword id="KW-1003">Cell membrane</keyword>
<keyword id="KW-0472">Membrane</keyword>
<keyword id="KW-0547">Nucleotide-binding</keyword>
<keyword id="KW-0592">Phosphate transport</keyword>
<keyword id="KW-1278">Translocase</keyword>
<keyword id="KW-0813">Transport</keyword>
<dbReference type="EC" id="7.3.2.1" evidence="1"/>
<dbReference type="EMBL" id="CP000076">
    <property type="protein sequence ID" value="AAY95304.1"/>
    <property type="molecule type" value="Genomic_DNA"/>
</dbReference>
<dbReference type="RefSeq" id="WP_011064282.1">
    <property type="nucleotide sequence ID" value="NC_004129.6"/>
</dbReference>
<dbReference type="SMR" id="Q4K3K9"/>
<dbReference type="STRING" id="220664.PFL_6116"/>
<dbReference type="GeneID" id="57479075"/>
<dbReference type="KEGG" id="pfl:PFL_6116"/>
<dbReference type="PATRIC" id="fig|220664.5.peg.6244"/>
<dbReference type="eggNOG" id="COG1117">
    <property type="taxonomic scope" value="Bacteria"/>
</dbReference>
<dbReference type="HOGENOM" id="CLU_000604_1_22_6"/>
<dbReference type="Proteomes" id="UP000008540">
    <property type="component" value="Chromosome"/>
</dbReference>
<dbReference type="GO" id="GO:0005886">
    <property type="term" value="C:plasma membrane"/>
    <property type="evidence" value="ECO:0007669"/>
    <property type="project" value="UniProtKB-SubCell"/>
</dbReference>
<dbReference type="GO" id="GO:0005524">
    <property type="term" value="F:ATP binding"/>
    <property type="evidence" value="ECO:0007669"/>
    <property type="project" value="UniProtKB-KW"/>
</dbReference>
<dbReference type="GO" id="GO:0016887">
    <property type="term" value="F:ATP hydrolysis activity"/>
    <property type="evidence" value="ECO:0007669"/>
    <property type="project" value="InterPro"/>
</dbReference>
<dbReference type="GO" id="GO:0015415">
    <property type="term" value="F:ATPase-coupled phosphate ion transmembrane transporter activity"/>
    <property type="evidence" value="ECO:0007669"/>
    <property type="project" value="UniProtKB-EC"/>
</dbReference>
<dbReference type="GO" id="GO:0035435">
    <property type="term" value="P:phosphate ion transmembrane transport"/>
    <property type="evidence" value="ECO:0007669"/>
    <property type="project" value="InterPro"/>
</dbReference>
<dbReference type="CDD" id="cd03260">
    <property type="entry name" value="ABC_PstB_phosphate_transporter"/>
    <property type="match status" value="1"/>
</dbReference>
<dbReference type="FunFam" id="3.40.50.300:FF:000132">
    <property type="entry name" value="Phosphate import ATP-binding protein PstB"/>
    <property type="match status" value="1"/>
</dbReference>
<dbReference type="Gene3D" id="3.40.50.300">
    <property type="entry name" value="P-loop containing nucleotide triphosphate hydrolases"/>
    <property type="match status" value="1"/>
</dbReference>
<dbReference type="InterPro" id="IPR003593">
    <property type="entry name" value="AAA+_ATPase"/>
</dbReference>
<dbReference type="InterPro" id="IPR003439">
    <property type="entry name" value="ABC_transporter-like_ATP-bd"/>
</dbReference>
<dbReference type="InterPro" id="IPR017871">
    <property type="entry name" value="ABC_transporter-like_CS"/>
</dbReference>
<dbReference type="InterPro" id="IPR027417">
    <property type="entry name" value="P-loop_NTPase"/>
</dbReference>
<dbReference type="InterPro" id="IPR005670">
    <property type="entry name" value="PstB-like"/>
</dbReference>
<dbReference type="NCBIfam" id="TIGR00972">
    <property type="entry name" value="3a0107s01c2"/>
    <property type="match status" value="1"/>
</dbReference>
<dbReference type="PANTHER" id="PTHR43423">
    <property type="entry name" value="ABC TRANSPORTER I FAMILY MEMBER 17"/>
    <property type="match status" value="1"/>
</dbReference>
<dbReference type="PANTHER" id="PTHR43423:SF12">
    <property type="entry name" value="IRON EXPORT ATP-BINDING PROTEIN FETA-RELATED"/>
    <property type="match status" value="1"/>
</dbReference>
<dbReference type="Pfam" id="PF00005">
    <property type="entry name" value="ABC_tran"/>
    <property type="match status" value="1"/>
</dbReference>
<dbReference type="SMART" id="SM00382">
    <property type="entry name" value="AAA"/>
    <property type="match status" value="1"/>
</dbReference>
<dbReference type="SUPFAM" id="SSF52540">
    <property type="entry name" value="P-loop containing nucleoside triphosphate hydrolases"/>
    <property type="match status" value="1"/>
</dbReference>
<dbReference type="PROSITE" id="PS00211">
    <property type="entry name" value="ABC_TRANSPORTER_1"/>
    <property type="match status" value="1"/>
</dbReference>
<dbReference type="PROSITE" id="PS50893">
    <property type="entry name" value="ABC_TRANSPORTER_2"/>
    <property type="match status" value="1"/>
</dbReference>
<dbReference type="PROSITE" id="PS51238">
    <property type="entry name" value="PSTB"/>
    <property type="match status" value="1"/>
</dbReference>